<sequence>MTEIQKPYDLKGRSLLKESDFTKAEFEGLIDFAITLKEYKKNGIKHHYLSGKNIALLFEKNSTRTRAAFTVASIDLGAHPEFLGKNDIQLGKKESVEDTAKVLGRMFDGIEFRGFSQQAVEDLAKFSGVPVWNGLTDDWHPTQMLADFMTIKENFGYLEGINLTYVGDGRNNIAHSLMVAGAMLGVNVRICTPKSLNPKEAYVDIAKEKASQYGGSIMITDNIAEAVENTDAIYTDVWVSMGEESEFEQRINLLKDYQVNQQMFDLTGKDSTIFLHCLPAFHDTNTLYGQEIYEKYGLAEMEVTDQIFRSEHSKVFDQAENRMHTIKAVMAATLGS</sequence>
<organism>
    <name type="scientific">Staphylococcus aureus (strain N315)</name>
    <dbReference type="NCBI Taxonomy" id="158879"/>
    <lineage>
        <taxon>Bacteria</taxon>
        <taxon>Bacillati</taxon>
        <taxon>Bacillota</taxon>
        <taxon>Bacilli</taxon>
        <taxon>Bacillales</taxon>
        <taxon>Staphylococcaceae</taxon>
        <taxon>Staphylococcus</taxon>
    </lineage>
</organism>
<accession>P65602</accession>
<accession>Q99R03</accession>
<evidence type="ECO:0000250" key="1"/>
<evidence type="ECO:0000255" key="2">
    <source>
        <dbReference type="HAMAP-Rule" id="MF_01109"/>
    </source>
</evidence>
<evidence type="ECO:0000305" key="3"/>
<reference key="1">
    <citation type="journal article" date="2001" name="Lancet">
        <title>Whole genome sequencing of meticillin-resistant Staphylococcus aureus.</title>
        <authorList>
            <person name="Kuroda M."/>
            <person name="Ohta T."/>
            <person name="Uchiyama I."/>
            <person name="Baba T."/>
            <person name="Yuzawa H."/>
            <person name="Kobayashi I."/>
            <person name="Cui L."/>
            <person name="Oguchi A."/>
            <person name="Aoki K."/>
            <person name="Nagai Y."/>
            <person name="Lian J.-Q."/>
            <person name="Ito T."/>
            <person name="Kanamori M."/>
            <person name="Matsumaru H."/>
            <person name="Maruyama A."/>
            <person name="Murakami H."/>
            <person name="Hosoyama A."/>
            <person name="Mizutani-Ui Y."/>
            <person name="Takahashi N.K."/>
            <person name="Sawano T."/>
            <person name="Inoue R."/>
            <person name="Kaito C."/>
            <person name="Sekimizu K."/>
            <person name="Hirakawa H."/>
            <person name="Kuhara S."/>
            <person name="Goto S."/>
            <person name="Yabuzaki J."/>
            <person name="Kanehisa M."/>
            <person name="Yamashita A."/>
            <person name="Oshima K."/>
            <person name="Furuya K."/>
            <person name="Yoshino C."/>
            <person name="Shiba T."/>
            <person name="Hattori M."/>
            <person name="Ogasawara N."/>
            <person name="Hayashi H."/>
            <person name="Hiramatsu K."/>
        </authorList>
    </citation>
    <scope>NUCLEOTIDE SEQUENCE [LARGE SCALE GENOMIC DNA]</scope>
    <source>
        <strain>N315</strain>
    </source>
</reference>
<reference key="2">
    <citation type="submission" date="2005-11" db="UniProtKB">
        <title>Shotgun proteomic analysis of total protein extract of S. aureus S30 versus N315.</title>
        <authorList>
            <person name="Stenz L."/>
        </authorList>
    </citation>
    <scope>IDENTIFICATION BY MASS SPECTROMETRY</scope>
</reference>
<reference key="3">
    <citation type="submission" date="2007-10" db="UniProtKB">
        <title>Shotgun proteomic analysis of total and membrane protein extracts of S. aureus strain N315.</title>
        <authorList>
            <person name="Vaezzadeh A.R."/>
            <person name="Deshusses J."/>
            <person name="Lescuyer P."/>
            <person name="Hochstrasser D.F."/>
        </authorList>
    </citation>
    <scope>IDENTIFICATION BY MASS SPECTROMETRY [LARGE SCALE ANALYSIS]</scope>
    <source>
        <strain>N315</strain>
    </source>
</reference>
<gene>
    <name type="primary">arcB</name>
    <name type="ordered locus">SA2427</name>
</gene>
<name>OTCC_STAAN</name>
<proteinExistence type="evidence at protein level"/>
<comment type="function">
    <text evidence="1">Reversibly catalyzes the transfer of the carbamoyl group from carbamoyl phosphate (CP) to the N(epsilon) atom of ornithine (ORN) to produce L-citrulline.</text>
</comment>
<comment type="catalytic activity">
    <reaction>
        <text>carbamoyl phosphate + L-ornithine = L-citrulline + phosphate + H(+)</text>
        <dbReference type="Rhea" id="RHEA:19513"/>
        <dbReference type="ChEBI" id="CHEBI:15378"/>
        <dbReference type="ChEBI" id="CHEBI:43474"/>
        <dbReference type="ChEBI" id="CHEBI:46911"/>
        <dbReference type="ChEBI" id="CHEBI:57743"/>
        <dbReference type="ChEBI" id="CHEBI:58228"/>
        <dbReference type="EC" id="2.1.3.3"/>
    </reaction>
</comment>
<comment type="pathway">
    <text>Amino-acid degradation; L-arginine degradation via ADI pathway; carbamoyl phosphate from L-arginine: step 2/2.</text>
</comment>
<comment type="subcellular location">
    <subcellularLocation>
        <location evidence="3">Cytoplasm</location>
    </subcellularLocation>
</comment>
<comment type="similarity">
    <text evidence="3">Belongs to the aspartate/ornithine carbamoyltransferase superfamily. OTCase family.</text>
</comment>
<feature type="chain" id="PRO_0000113013" description="Ornithine carbamoyltransferase, catabolic">
    <location>
        <begin position="1"/>
        <end position="336"/>
    </location>
</feature>
<feature type="binding site" evidence="2">
    <location>
        <begin position="62"/>
        <end position="65"/>
    </location>
    <ligand>
        <name>carbamoyl phosphate</name>
        <dbReference type="ChEBI" id="CHEBI:58228"/>
    </ligand>
</feature>
<feature type="binding site" evidence="2">
    <location>
        <position position="89"/>
    </location>
    <ligand>
        <name>carbamoyl phosphate</name>
        <dbReference type="ChEBI" id="CHEBI:58228"/>
    </ligand>
</feature>
<feature type="binding site" evidence="2">
    <location>
        <position position="113"/>
    </location>
    <ligand>
        <name>carbamoyl phosphate</name>
        <dbReference type="ChEBI" id="CHEBI:58228"/>
    </ligand>
</feature>
<feature type="binding site" evidence="2">
    <location>
        <begin position="140"/>
        <end position="143"/>
    </location>
    <ligand>
        <name>carbamoyl phosphate</name>
        <dbReference type="ChEBI" id="CHEBI:58228"/>
    </ligand>
</feature>
<feature type="binding site" evidence="2">
    <location>
        <position position="172"/>
    </location>
    <ligand>
        <name>L-ornithine</name>
        <dbReference type="ChEBI" id="CHEBI:46911"/>
    </ligand>
</feature>
<feature type="binding site" evidence="2">
    <location>
        <position position="236"/>
    </location>
    <ligand>
        <name>L-ornithine</name>
        <dbReference type="ChEBI" id="CHEBI:46911"/>
    </ligand>
</feature>
<feature type="binding site" evidence="2">
    <location>
        <begin position="240"/>
        <end position="241"/>
    </location>
    <ligand>
        <name>L-ornithine</name>
        <dbReference type="ChEBI" id="CHEBI:46911"/>
    </ligand>
</feature>
<feature type="binding site" evidence="2">
    <location>
        <begin position="277"/>
        <end position="278"/>
    </location>
    <ligand>
        <name>carbamoyl phosphate</name>
        <dbReference type="ChEBI" id="CHEBI:58228"/>
    </ligand>
</feature>
<feature type="binding site" evidence="2">
    <location>
        <position position="322"/>
    </location>
    <ligand>
        <name>carbamoyl phosphate</name>
        <dbReference type="ChEBI" id="CHEBI:58228"/>
    </ligand>
</feature>
<keyword id="KW-0056">Arginine metabolism</keyword>
<keyword id="KW-0963">Cytoplasm</keyword>
<keyword id="KW-0808">Transferase</keyword>
<protein>
    <recommendedName>
        <fullName>Ornithine carbamoyltransferase, catabolic</fullName>
        <shortName>OTCase</shortName>
        <ecNumber>2.1.3.3</ecNumber>
    </recommendedName>
</protein>
<dbReference type="EC" id="2.1.3.3"/>
<dbReference type="EMBL" id="BA000018">
    <property type="protein sequence ID" value="BAB43732.1"/>
    <property type="molecule type" value="Genomic_DNA"/>
</dbReference>
<dbReference type="PIR" id="B90071">
    <property type="entry name" value="B90071"/>
</dbReference>
<dbReference type="SMR" id="P65602"/>
<dbReference type="EnsemblBacteria" id="BAB43732">
    <property type="protein sequence ID" value="BAB43732"/>
    <property type="gene ID" value="BAB43732"/>
</dbReference>
<dbReference type="KEGG" id="sau:SA2427"/>
<dbReference type="HOGENOM" id="CLU_043846_3_1_9"/>
<dbReference type="UniPathway" id="UPA00254">
    <property type="reaction ID" value="UER00365"/>
</dbReference>
<dbReference type="GO" id="GO:0005737">
    <property type="term" value="C:cytoplasm"/>
    <property type="evidence" value="ECO:0007669"/>
    <property type="project" value="UniProtKB-SubCell"/>
</dbReference>
<dbReference type="GO" id="GO:0016597">
    <property type="term" value="F:amino acid binding"/>
    <property type="evidence" value="ECO:0007669"/>
    <property type="project" value="InterPro"/>
</dbReference>
<dbReference type="GO" id="GO:0004585">
    <property type="term" value="F:ornithine carbamoyltransferase activity"/>
    <property type="evidence" value="ECO:0007669"/>
    <property type="project" value="UniProtKB-UniRule"/>
</dbReference>
<dbReference type="GO" id="GO:0042450">
    <property type="term" value="P:arginine biosynthetic process via ornithine"/>
    <property type="evidence" value="ECO:0007669"/>
    <property type="project" value="TreeGrafter"/>
</dbReference>
<dbReference type="GO" id="GO:0019547">
    <property type="term" value="P:arginine catabolic process to ornithine"/>
    <property type="evidence" value="ECO:0007669"/>
    <property type="project" value="UniProtKB-UniPathway"/>
</dbReference>
<dbReference type="GO" id="GO:0019240">
    <property type="term" value="P:citrulline biosynthetic process"/>
    <property type="evidence" value="ECO:0007669"/>
    <property type="project" value="TreeGrafter"/>
</dbReference>
<dbReference type="GO" id="GO:0006526">
    <property type="term" value="P:L-arginine biosynthetic process"/>
    <property type="evidence" value="ECO:0007669"/>
    <property type="project" value="UniProtKB-UniRule"/>
</dbReference>
<dbReference type="FunFam" id="3.40.50.1370:FF:000008">
    <property type="entry name" value="Ornithine carbamoyltransferase"/>
    <property type="match status" value="1"/>
</dbReference>
<dbReference type="Gene3D" id="3.40.50.1370">
    <property type="entry name" value="Aspartate/ornithine carbamoyltransferase"/>
    <property type="match status" value="2"/>
</dbReference>
<dbReference type="HAMAP" id="MF_01109">
    <property type="entry name" value="OTCase"/>
    <property type="match status" value="1"/>
</dbReference>
<dbReference type="InterPro" id="IPR006132">
    <property type="entry name" value="Asp/Orn_carbamoyltranf_P-bd"/>
</dbReference>
<dbReference type="InterPro" id="IPR006130">
    <property type="entry name" value="Asp/Orn_carbamoylTrfase"/>
</dbReference>
<dbReference type="InterPro" id="IPR036901">
    <property type="entry name" value="Asp/Orn_carbamoylTrfase_sf"/>
</dbReference>
<dbReference type="InterPro" id="IPR006131">
    <property type="entry name" value="Asp_carbamoyltransf_Asp/Orn-bd"/>
</dbReference>
<dbReference type="InterPro" id="IPR002292">
    <property type="entry name" value="Orn/put_carbamltrans"/>
</dbReference>
<dbReference type="InterPro" id="IPR024904">
    <property type="entry name" value="OTCase_ArgI"/>
</dbReference>
<dbReference type="NCBIfam" id="TIGR00658">
    <property type="entry name" value="orni_carb_tr"/>
    <property type="match status" value="1"/>
</dbReference>
<dbReference type="NCBIfam" id="NF001986">
    <property type="entry name" value="PRK00779.1"/>
    <property type="match status" value="1"/>
</dbReference>
<dbReference type="PANTHER" id="PTHR45753:SF1">
    <property type="entry name" value="ORNITHINE CARBAMOYLTRANSFERASE, CATABOLIC"/>
    <property type="match status" value="1"/>
</dbReference>
<dbReference type="PANTHER" id="PTHR45753">
    <property type="entry name" value="ORNITHINE CARBAMOYLTRANSFERASE, MITOCHONDRIAL"/>
    <property type="match status" value="1"/>
</dbReference>
<dbReference type="Pfam" id="PF00185">
    <property type="entry name" value="OTCace"/>
    <property type="match status" value="1"/>
</dbReference>
<dbReference type="Pfam" id="PF02729">
    <property type="entry name" value="OTCace_N"/>
    <property type="match status" value="1"/>
</dbReference>
<dbReference type="PRINTS" id="PR00100">
    <property type="entry name" value="AOTCASE"/>
</dbReference>
<dbReference type="PRINTS" id="PR00102">
    <property type="entry name" value="OTCASE"/>
</dbReference>
<dbReference type="SUPFAM" id="SSF53671">
    <property type="entry name" value="Aspartate/ornithine carbamoyltransferase"/>
    <property type="match status" value="1"/>
</dbReference>
<dbReference type="PROSITE" id="PS00097">
    <property type="entry name" value="CARBAMOYLTRANSFERASE"/>
    <property type="match status" value="1"/>
</dbReference>